<geneLocation type="mitochondrion"/>
<keyword id="KW-0249">Electron transport</keyword>
<keyword id="KW-0472">Membrane</keyword>
<keyword id="KW-0496">Mitochondrion</keyword>
<keyword id="KW-0999">Mitochondrion inner membrane</keyword>
<keyword id="KW-0520">NAD</keyword>
<keyword id="KW-0679">Respiratory chain</keyword>
<keyword id="KW-1278">Translocase</keyword>
<keyword id="KW-0812">Transmembrane</keyword>
<keyword id="KW-1133">Transmembrane helix</keyword>
<keyword id="KW-0813">Transport</keyword>
<keyword id="KW-0830">Ubiquinone</keyword>
<name>NU1M_DIDVI</name>
<protein>
    <recommendedName>
        <fullName>NADH-ubiquinone oxidoreductase chain 1</fullName>
        <ecNumber>7.1.1.2</ecNumber>
    </recommendedName>
    <alternativeName>
        <fullName>NADH dehydrogenase subunit 1</fullName>
    </alternativeName>
</protein>
<evidence type="ECO:0000250" key="1"/>
<evidence type="ECO:0000255" key="2"/>
<evidence type="ECO:0000305" key="3"/>
<feature type="chain" id="PRO_0000117382" description="NADH-ubiquinone oxidoreductase chain 1">
    <location>
        <begin position="1"/>
        <end position="318"/>
    </location>
</feature>
<feature type="transmembrane region" description="Helical" evidence="2">
    <location>
        <begin position="2"/>
        <end position="22"/>
    </location>
</feature>
<feature type="transmembrane region" description="Helical" evidence="2">
    <location>
        <begin position="68"/>
        <end position="88"/>
    </location>
</feature>
<feature type="transmembrane region" description="Helical" evidence="2">
    <location>
        <begin position="100"/>
        <end position="120"/>
    </location>
</feature>
<feature type="transmembrane region" description="Helical" evidence="2">
    <location>
        <begin position="136"/>
        <end position="156"/>
    </location>
</feature>
<feature type="transmembrane region" description="Helical" evidence="2">
    <location>
        <begin position="172"/>
        <end position="192"/>
    </location>
</feature>
<feature type="transmembrane region" description="Helical" evidence="2">
    <location>
        <begin position="223"/>
        <end position="243"/>
    </location>
</feature>
<feature type="transmembrane region" description="Helical" evidence="2">
    <location>
        <begin position="253"/>
        <end position="273"/>
    </location>
</feature>
<feature type="transmembrane region" description="Helical" evidence="2">
    <location>
        <begin position="293"/>
        <end position="313"/>
    </location>
</feature>
<dbReference type="EC" id="7.1.1.2"/>
<dbReference type="EMBL" id="Z29573">
    <property type="protein sequence ID" value="CAA82677.1"/>
    <property type="molecule type" value="Genomic_DNA"/>
</dbReference>
<dbReference type="PIR" id="S47870">
    <property type="entry name" value="S47870"/>
</dbReference>
<dbReference type="RefSeq" id="NP_007095.1">
    <property type="nucleotide sequence ID" value="NC_001610.1"/>
</dbReference>
<dbReference type="SMR" id="P41304"/>
<dbReference type="GeneID" id="807783"/>
<dbReference type="CTD" id="4535"/>
<dbReference type="GO" id="GO:0005743">
    <property type="term" value="C:mitochondrial inner membrane"/>
    <property type="evidence" value="ECO:0007669"/>
    <property type="project" value="UniProtKB-SubCell"/>
</dbReference>
<dbReference type="GO" id="GO:0008137">
    <property type="term" value="F:NADH dehydrogenase (ubiquinone) activity"/>
    <property type="evidence" value="ECO:0007669"/>
    <property type="project" value="UniProtKB-EC"/>
</dbReference>
<dbReference type="GO" id="GO:0009060">
    <property type="term" value="P:aerobic respiration"/>
    <property type="evidence" value="ECO:0007669"/>
    <property type="project" value="TreeGrafter"/>
</dbReference>
<dbReference type="HAMAP" id="MF_01350">
    <property type="entry name" value="NDH1_NuoH"/>
    <property type="match status" value="1"/>
</dbReference>
<dbReference type="InterPro" id="IPR001694">
    <property type="entry name" value="NADH_UbQ_OxRdtase_su1/FPO"/>
</dbReference>
<dbReference type="InterPro" id="IPR018086">
    <property type="entry name" value="NADH_UbQ_OxRdtase_su1_CS"/>
</dbReference>
<dbReference type="PANTHER" id="PTHR11432">
    <property type="entry name" value="NADH DEHYDROGENASE SUBUNIT 1"/>
    <property type="match status" value="1"/>
</dbReference>
<dbReference type="PANTHER" id="PTHR11432:SF3">
    <property type="entry name" value="NADH-UBIQUINONE OXIDOREDUCTASE CHAIN 1"/>
    <property type="match status" value="1"/>
</dbReference>
<dbReference type="Pfam" id="PF00146">
    <property type="entry name" value="NADHdh"/>
    <property type="match status" value="1"/>
</dbReference>
<dbReference type="PROSITE" id="PS00667">
    <property type="entry name" value="COMPLEX1_ND1_1"/>
    <property type="match status" value="1"/>
</dbReference>
<dbReference type="PROSITE" id="PS00668">
    <property type="entry name" value="COMPLEX1_ND1_2"/>
    <property type="match status" value="1"/>
</dbReference>
<accession>P41304</accession>
<proteinExistence type="inferred from homology"/>
<organism>
    <name type="scientific">Didelphis virginiana</name>
    <name type="common">North American opossum</name>
    <name type="synonym">Didelphis marsupialis virginiana</name>
    <dbReference type="NCBI Taxonomy" id="9267"/>
    <lineage>
        <taxon>Eukaryota</taxon>
        <taxon>Metazoa</taxon>
        <taxon>Chordata</taxon>
        <taxon>Craniata</taxon>
        <taxon>Vertebrata</taxon>
        <taxon>Euteleostomi</taxon>
        <taxon>Mammalia</taxon>
        <taxon>Metatheria</taxon>
        <taxon>Didelphimorphia</taxon>
        <taxon>Didelphidae</taxon>
        <taxon>Didelphis</taxon>
    </lineage>
</organism>
<comment type="function">
    <text evidence="1">Core subunit of the mitochondrial membrane respiratory chain NADH dehydrogenase (Complex I) that is believed to belong to the minimal assembly required for catalysis. Complex I functions in the transfer of electrons from NADH to the respiratory chain. The immediate electron acceptor for the enzyme is believed to be ubiquinone (By similarity).</text>
</comment>
<comment type="catalytic activity">
    <reaction>
        <text>a ubiquinone + NADH + 5 H(+)(in) = a ubiquinol + NAD(+) + 4 H(+)(out)</text>
        <dbReference type="Rhea" id="RHEA:29091"/>
        <dbReference type="Rhea" id="RHEA-COMP:9565"/>
        <dbReference type="Rhea" id="RHEA-COMP:9566"/>
        <dbReference type="ChEBI" id="CHEBI:15378"/>
        <dbReference type="ChEBI" id="CHEBI:16389"/>
        <dbReference type="ChEBI" id="CHEBI:17976"/>
        <dbReference type="ChEBI" id="CHEBI:57540"/>
        <dbReference type="ChEBI" id="CHEBI:57945"/>
        <dbReference type="EC" id="7.1.1.2"/>
    </reaction>
</comment>
<comment type="subcellular location">
    <subcellularLocation>
        <location evidence="1">Mitochondrion inner membrane</location>
        <topology evidence="1">Multi-pass membrane protein</topology>
    </subcellularLocation>
</comment>
<comment type="similarity">
    <text evidence="3">Belongs to the complex I subunit 1 family.</text>
</comment>
<sequence>MFLINLLMYIIPILLAVAFLTLVERKVLGYMQFRKGPNVIGPYGILQPFADALKLFIKEPLRPMTSSISMFTIAPTLALTLAFTIWTPLPMPNALLDLNLGLLFILALSGLSVYSILWSGWASNSKYALIGALRAVAQTISYEVTLAIILLSIMLINGSFTLKNMLITQENMWLIMMTWPLTMMWYISTLAETNRAPFDLTEGESELVSGFNVEYAAGPFAMFFLAEYANIMVMNAITATLFLGSPLSSNIPYINSMTFMMKMLILTTTFLWIRASYPRFRYDQLMYLLWKNFLPITLALCLWYISIPISLSSLPPQL</sequence>
<gene>
    <name type="primary">MT-ND1</name>
    <name type="synonym">MTND1</name>
    <name type="synonym">NADH1</name>
    <name type="synonym">ND1</name>
</gene>
<reference key="1">
    <citation type="journal article" date="1994" name="Genetics">
        <title>The marsupial mitochondrial genome and the evolution of placental mammals.</title>
        <authorList>
            <person name="Janke A."/>
            <person name="Feldmaier-Fuchs G."/>
            <person name="Thomas K."/>
            <person name="von Haeseler A."/>
            <person name="Paabo S."/>
        </authorList>
    </citation>
    <scope>NUCLEOTIDE SEQUENCE [GENOMIC DNA]</scope>
    <source>
        <tissue>Liver</tissue>
    </source>
</reference>